<evidence type="ECO:0000255" key="1">
    <source>
        <dbReference type="PROSITE-ProRule" id="PRU00539"/>
    </source>
</evidence>
<evidence type="ECO:0000305" key="2"/>
<gene>
    <name type="ORF">ORF1/ORF2</name>
</gene>
<sequence length="867" mass="98658">MFFEILIGASAKAVKDFISHCYSRLKSIYYSFKRWLMEISGQFKAHDAFVNMCFGHMADIEDFEAELAEEFAEREDEVEEARSLLKLLVAQKSKTGVTEAWTDFFTKSRGGVYAPLSCEPTRQELEAKSEKLEKLLEEQHQFEVRAAKKYIKEKGRGFINCWNDLRSRLRLVKDVKDEAKDNARAAAKIGAEMFAPVDVQDLYSFTEVKKVETGLMKEVVKERNGEEEKHLEPIMEEVRSIKDTAEARDAASTWITETVKLKNSTLNADELSLATIARYVENVGDKFKLDIASKTYLKQVASMSVPIPTNKDIKLKMVLQSPEARARREPLDVLDSVGFLEGLCTASGFESPFPILGLPEIAVTDGARLRKVSSNIRYLSQTHLGLVYKAPNASLHNALVAVERRVFTVGKGDKAIYPPRPEHDIFTDTMDYFQKSIIEEVGYCRTYPAQLLANSYSAGKRAMYHKAIASLRTVPYHQKDANVQAFLKKEKHWMTKDIAPRLICPRSKRYNIILGTRLKFNEKKIMHAIDSVFGSPTVLSGYDNFKQGRIIAKKWQKFACPVAIGVDASRFDQHVSEQALKWEHGIYNGIFGDSELALALEHQITNNIKMFVEDKMLRFKVRGHRMSGDINTSMGNKLIMCGMMHAYFKKLGVEAELCNNGDDCVIITDRANEKLFDGMYDHFLQYGFNMVTEKPVYELEQLEFCQSKPVSINGKYRMVRRPDSIGKDSTTLLSMLNQSDVKSYMSAVAQCGLVLNAGVPILESFYKCLYRSSGYKKVSEEFIKNVISYGTDERLQGRRTYNETPITNHSRMSYWESFGVDPKIQQIVERYYDGLTVSAQLQSVKVTTPHLQSILLSIPENHSQIEY</sequence>
<dbReference type="EC" id="2.7.7.48"/>
<dbReference type="EMBL" id="D11032">
    <property type="protein sequence ID" value="BAA01785.1"/>
    <property type="status" value="ALT_FRAME"/>
    <property type="molecule type" value="Genomic_RNA"/>
</dbReference>
<dbReference type="PIR" id="JQ1415">
    <property type="entry name" value="RRVQCM"/>
</dbReference>
<dbReference type="GO" id="GO:0000166">
    <property type="term" value="F:nucleotide binding"/>
    <property type="evidence" value="ECO:0007669"/>
    <property type="project" value="UniProtKB-KW"/>
</dbReference>
<dbReference type="GO" id="GO:0003723">
    <property type="term" value="F:RNA binding"/>
    <property type="evidence" value="ECO:0007669"/>
    <property type="project" value="InterPro"/>
</dbReference>
<dbReference type="GO" id="GO:0003968">
    <property type="term" value="F:RNA-directed RNA polymerase activity"/>
    <property type="evidence" value="ECO:0007669"/>
    <property type="project" value="UniProtKB-KW"/>
</dbReference>
<dbReference type="GO" id="GO:0039694">
    <property type="term" value="P:viral RNA genome replication"/>
    <property type="evidence" value="ECO:0007669"/>
    <property type="project" value="InterPro"/>
</dbReference>
<dbReference type="GO" id="GO:0075523">
    <property type="term" value="P:viral translational frameshifting"/>
    <property type="evidence" value="ECO:0007669"/>
    <property type="project" value="UniProtKB-KW"/>
</dbReference>
<dbReference type="CDD" id="cd23233">
    <property type="entry name" value="Luteovirus_RdRp"/>
    <property type="match status" value="1"/>
</dbReference>
<dbReference type="Gene3D" id="3.30.70.270">
    <property type="match status" value="1"/>
</dbReference>
<dbReference type="InterPro" id="IPR043502">
    <property type="entry name" value="DNA/RNA_pol_sf"/>
</dbReference>
<dbReference type="InterPro" id="IPR013674">
    <property type="entry name" value="Luteo_Rpol_P1-P2"/>
</dbReference>
<dbReference type="InterPro" id="IPR043128">
    <property type="entry name" value="Rev_trsase/Diguanyl_cyclase"/>
</dbReference>
<dbReference type="InterPro" id="IPR007094">
    <property type="entry name" value="RNA-dir_pol_PSvirus"/>
</dbReference>
<dbReference type="InterPro" id="IPR002166">
    <property type="entry name" value="RNA_pol_HCV"/>
</dbReference>
<dbReference type="Pfam" id="PF08467">
    <property type="entry name" value="Luteo_P1-P2"/>
    <property type="match status" value="1"/>
</dbReference>
<dbReference type="Pfam" id="PF00998">
    <property type="entry name" value="RdRP_3"/>
    <property type="match status" value="1"/>
</dbReference>
<dbReference type="SUPFAM" id="SSF56672">
    <property type="entry name" value="DNA/RNA polymerases"/>
    <property type="match status" value="1"/>
</dbReference>
<dbReference type="PROSITE" id="PS50507">
    <property type="entry name" value="RDRP_SSRNA_POS"/>
    <property type="match status" value="1"/>
</dbReference>
<organism>
    <name type="scientific">Barley yellow dwarf virus (isolate P-PAV)</name>
    <name type="common">BYDV</name>
    <dbReference type="NCBI Taxonomy" id="31724"/>
    <lineage>
        <taxon>Viruses</taxon>
        <taxon>Riboviria</taxon>
        <taxon>Orthornavirae</taxon>
        <taxon>Kitrinoviricota</taxon>
        <taxon>Tolucaviricetes</taxon>
        <taxon>Tolivirales</taxon>
        <taxon>Tombusviridae</taxon>
        <taxon>Regressovirinae</taxon>
        <taxon>Luteovirus</taxon>
        <taxon>Luteovirus pavhordei</taxon>
        <taxon>Barley yellow dwarf virus (isolate PAV)</taxon>
    </lineage>
</organism>
<proteinExistence type="inferred from homology"/>
<keyword id="KW-0547">Nucleotide-binding</keyword>
<keyword id="KW-0548">Nucleotidyltransferase</keyword>
<keyword id="KW-0688">Ribosomal frameshifting</keyword>
<keyword id="KW-0696">RNA-directed RNA polymerase</keyword>
<keyword id="KW-0808">Transferase</keyword>
<keyword id="KW-0693">Viral RNA replication</keyword>
<organismHost>
    <name type="scientific">Avena byzantina</name>
    <dbReference type="NCBI Taxonomy" id="146531"/>
</organismHost>
<organismHost>
    <name type="scientific">Avena sativa</name>
    <name type="common">Oat</name>
    <dbReference type="NCBI Taxonomy" id="4498"/>
</organismHost>
<organismHost>
    <name type="scientific">Hordeum vulgare</name>
    <name type="common">Barley</name>
    <dbReference type="NCBI Taxonomy" id="4513"/>
</organismHost>
<organismHost>
    <name type="scientific">Lolium multiflorum</name>
    <name type="common">Italian ryegrass</name>
    <name type="synonym">Lolium perenne subsp. multiflorum</name>
    <dbReference type="NCBI Taxonomy" id="4521"/>
</organismHost>
<organismHost>
    <name type="scientific">Lolium perenne</name>
    <name type="common">Perennial ryegrass</name>
    <dbReference type="NCBI Taxonomy" id="4522"/>
</organismHost>
<organismHost>
    <name type="scientific">Oryza sativa</name>
    <name type="common">Rice</name>
    <dbReference type="NCBI Taxonomy" id="4530"/>
</organismHost>
<organismHost>
    <name type="scientific">Secale cereale</name>
    <name type="common">Rye</name>
    <dbReference type="NCBI Taxonomy" id="4550"/>
</organismHost>
<organismHost>
    <name type="scientific">Triticum aestivum</name>
    <name type="common">Wheat</name>
    <dbReference type="NCBI Taxonomy" id="4565"/>
</organismHost>
<organismHost>
    <name type="scientific">Zea mays</name>
    <name type="common">Maize</name>
    <dbReference type="NCBI Taxonomy" id="4577"/>
</organismHost>
<accession>P29045</accession>
<protein>
    <recommendedName>
        <fullName>Putative RNA-directed RNA polymerase</fullName>
        <ecNumber>2.7.7.48</ecNumber>
    </recommendedName>
</protein>
<comment type="function">
    <text>Probable polymerase.</text>
</comment>
<comment type="catalytic activity">
    <reaction evidence="1">
        <text>RNA(n) + a ribonucleoside 5'-triphosphate = RNA(n+1) + diphosphate</text>
        <dbReference type="Rhea" id="RHEA:21248"/>
        <dbReference type="Rhea" id="RHEA-COMP:14527"/>
        <dbReference type="Rhea" id="RHEA-COMP:17342"/>
        <dbReference type="ChEBI" id="CHEBI:33019"/>
        <dbReference type="ChEBI" id="CHEBI:61557"/>
        <dbReference type="ChEBI" id="CHEBI:140395"/>
        <dbReference type="EC" id="2.7.7.48"/>
    </reaction>
</comment>
<comment type="alternative products">
    <event type="ribosomal frameshifting"/>
    <isoform>
        <id>P29045-1</id>
        <name>Putative RNA-directed RNA polymerase</name>
        <sequence type="displayed"/>
    </isoform>
    <isoform>
        <id>P29045-2</id>
        <name>39 kDa protein</name>
        <sequence type="described" ref="VSP_031896"/>
    </isoform>
</comment>
<comment type="miscellaneous">
    <molecule>Isoform Putative RNA-directed RNA polymerase</molecule>
    <text>Produced by -1 ribosomal frameshifting between codons 339 and 340.</text>
</comment>
<comment type="miscellaneous">
    <molecule>Isoform 39 kDa protein</molecule>
    <text evidence="2">Produced by conventional translation.</text>
</comment>
<comment type="similarity">
    <text evidence="2">Belongs to the luteoviruses RNA polymerase family.</text>
</comment>
<reference key="1">
    <citation type="journal article" date="1992" name="J. Gen. Virol.">
        <title>Nucleotide sequence analysis of the genomes of the MAV-PS1 and P-PAV isolates of barley yellow dwarf virus.</title>
        <authorList>
            <person name="Ueng P.P."/>
            <person name="Vincent J.R."/>
            <person name="Kawata E.E."/>
            <person name="Lei C.H."/>
            <person name="Lister R.M."/>
            <person name="Larkins B.A."/>
        </authorList>
    </citation>
    <scope>NUCLEOTIDE SEQUENCE [GENOMIC RNA]</scope>
</reference>
<feature type="chain" id="PRO_0000039188" description="Putative RNA-directed RNA polymerase">
    <location>
        <begin position="1"/>
        <end position="867"/>
    </location>
</feature>
<feature type="domain" description="RdRp catalytic" evidence="1">
    <location>
        <begin position="561"/>
        <end position="676"/>
    </location>
</feature>
<feature type="splice variant" id="VSP_031896" description="In isoform 39 kDa protein." evidence="2">
    <location>
        <begin position="340"/>
        <end position="867"/>
    </location>
</feature>
<feature type="sequence variant">
    <original>I</original>
    <variation>N</variation>
    <location>
        <position position="865"/>
    </location>
</feature>
<name>RDRP_BYDVR</name>